<protein>
    <recommendedName>
        <fullName evidence="2">Teretoxin Tan11.1</fullName>
    </recommendedName>
</protein>
<feature type="signal peptide" evidence="1">
    <location>
        <begin position="1"/>
        <end position="21"/>
    </location>
</feature>
<feature type="propeptide" id="PRO_0000435082" evidence="3">
    <location>
        <begin position="22"/>
        <end position="31"/>
    </location>
</feature>
<feature type="chain" id="PRO_0000435083" description="Teretoxin Tan11.1">
    <location>
        <begin position="32"/>
        <end position="72"/>
    </location>
</feature>
<name>TB1_TERAN</name>
<organism>
    <name type="scientific">Terebra anilis</name>
    <name type="common">Auger snail</name>
    <name type="synonym">Cinguloterebra anilis</name>
    <dbReference type="NCBI Taxonomy" id="553697"/>
    <lineage>
        <taxon>Eukaryota</taxon>
        <taxon>Metazoa</taxon>
        <taxon>Spiralia</taxon>
        <taxon>Lophotrochozoa</taxon>
        <taxon>Mollusca</taxon>
        <taxon>Gastropoda</taxon>
        <taxon>Caenogastropoda</taxon>
        <taxon>Neogastropoda</taxon>
        <taxon>Conoidea</taxon>
        <taxon>Terebridae</taxon>
        <taxon>Terebra</taxon>
    </lineage>
</organism>
<dbReference type="GO" id="GO:0005576">
    <property type="term" value="C:extracellular region"/>
    <property type="evidence" value="ECO:0007669"/>
    <property type="project" value="UniProtKB-SubCell"/>
</dbReference>
<dbReference type="GO" id="GO:0090729">
    <property type="term" value="F:toxin activity"/>
    <property type="evidence" value="ECO:0007669"/>
    <property type="project" value="UniProtKB-KW"/>
</dbReference>
<keyword id="KW-1015">Disulfide bond</keyword>
<keyword id="KW-0964">Secreted</keyword>
<keyword id="KW-0732">Signal</keyword>
<keyword id="KW-0800">Toxin</keyword>
<proteinExistence type="inferred from homology"/>
<accession>P0DN58</accession>
<reference key="1">
    <citation type="journal article" date="2015" name="Genome Biol. Evol.">
        <title>Molecular diversity and gene evolution of the venom arsenal of Terebridae predatory marine snails.</title>
        <authorList>
            <person name="Gorson J."/>
            <person name="Ramrattan G."/>
            <person name="Verdes A."/>
            <person name="Wright E.M."/>
            <person name="Kantor Y."/>
            <person name="Rajaram Srinivasan R."/>
            <person name="Musunuri R."/>
            <person name="Packer D."/>
            <person name="Albano G."/>
            <person name="Qiu W.G."/>
            <person name="Holford M."/>
        </authorList>
    </citation>
    <scope>NUCLEOTIDE SEQUENCE [MRNA]</scope>
    <source>
        <tissue>Venom duct</tissue>
    </source>
</reference>
<sequence>MLATKMSVTFCFLLMLTTVMLPTEAKTVAGRTACTQHTSCDTPGAKYCCQNSDCCGGSEHFCASFGQCMRSF</sequence>
<evidence type="ECO:0000255" key="1"/>
<evidence type="ECO:0000303" key="2">
    <source>
    </source>
</evidence>
<evidence type="ECO:0000305" key="3"/>
<evidence type="ECO:0000305" key="4">
    <source>
    </source>
</evidence>
<comment type="subcellular location">
    <subcellularLocation>
        <location evidence="4">Secreted</location>
    </subcellularLocation>
</comment>
<comment type="tissue specificity">
    <text evidence="4">Expressed by the venom duct.</text>
</comment>
<comment type="domain">
    <text>The cysteine framework is XI (C-C-CC-CC-C-C).</text>
</comment>
<comment type="PTM">
    <text evidence="3">Contains 4 disulfide bonds.</text>
</comment>
<comment type="similarity">
    <text>Belongs to the teretoxin H (TH) superfamily.</text>
</comment>